<accession>C4ZXM8</accession>
<feature type="chain" id="PRO_1000204908" description="Large ribosomal subunit protein bL33">
    <location>
        <begin position="1"/>
        <end position="55"/>
    </location>
</feature>
<protein>
    <recommendedName>
        <fullName evidence="1">Large ribosomal subunit protein bL33</fullName>
    </recommendedName>
    <alternativeName>
        <fullName evidence="2">50S ribosomal protein L33</fullName>
    </alternativeName>
</protein>
<comment type="similarity">
    <text evidence="1">Belongs to the bacterial ribosomal protein bL33 family.</text>
</comment>
<name>RL33_ECOBW</name>
<sequence>MAKGIREKIKLVSSAGTGHFYTTTKNKRTKPEKLELKKFDPVVRQHVIYKEAKIK</sequence>
<gene>
    <name evidence="1" type="primary">rpmG</name>
    <name type="ordered locus">BWG_3327</name>
</gene>
<evidence type="ECO:0000255" key="1">
    <source>
        <dbReference type="HAMAP-Rule" id="MF_00294"/>
    </source>
</evidence>
<evidence type="ECO:0000305" key="2"/>
<proteinExistence type="inferred from homology"/>
<dbReference type="EMBL" id="CP001396">
    <property type="protein sequence ID" value="ACR61870.1"/>
    <property type="molecule type" value="Genomic_DNA"/>
</dbReference>
<dbReference type="RefSeq" id="WP_001051798.1">
    <property type="nucleotide sequence ID" value="NC_012759.1"/>
</dbReference>
<dbReference type="SMR" id="C4ZXM8"/>
<dbReference type="GeneID" id="97607673"/>
<dbReference type="KEGG" id="ebw:BWG_3327"/>
<dbReference type="HOGENOM" id="CLU_190949_1_1_6"/>
<dbReference type="GO" id="GO:0022625">
    <property type="term" value="C:cytosolic large ribosomal subunit"/>
    <property type="evidence" value="ECO:0007669"/>
    <property type="project" value="TreeGrafter"/>
</dbReference>
<dbReference type="GO" id="GO:0003735">
    <property type="term" value="F:structural constituent of ribosome"/>
    <property type="evidence" value="ECO:0007669"/>
    <property type="project" value="InterPro"/>
</dbReference>
<dbReference type="GO" id="GO:0006412">
    <property type="term" value="P:translation"/>
    <property type="evidence" value="ECO:0007669"/>
    <property type="project" value="UniProtKB-UniRule"/>
</dbReference>
<dbReference type="FunFam" id="2.20.28.120:FF:000001">
    <property type="entry name" value="50S ribosomal protein L33"/>
    <property type="match status" value="1"/>
</dbReference>
<dbReference type="Gene3D" id="2.20.28.120">
    <property type="entry name" value="Ribosomal protein L33"/>
    <property type="match status" value="1"/>
</dbReference>
<dbReference type="HAMAP" id="MF_00294">
    <property type="entry name" value="Ribosomal_bL33"/>
    <property type="match status" value="1"/>
</dbReference>
<dbReference type="InterPro" id="IPR001705">
    <property type="entry name" value="Ribosomal_bL33"/>
</dbReference>
<dbReference type="InterPro" id="IPR018264">
    <property type="entry name" value="Ribosomal_bL33_CS"/>
</dbReference>
<dbReference type="InterPro" id="IPR038584">
    <property type="entry name" value="Ribosomal_bL33_sf"/>
</dbReference>
<dbReference type="InterPro" id="IPR011332">
    <property type="entry name" value="Ribosomal_zn-bd"/>
</dbReference>
<dbReference type="NCBIfam" id="NF001860">
    <property type="entry name" value="PRK00595.1"/>
    <property type="match status" value="1"/>
</dbReference>
<dbReference type="NCBIfam" id="TIGR01023">
    <property type="entry name" value="rpmG_bact"/>
    <property type="match status" value="1"/>
</dbReference>
<dbReference type="PANTHER" id="PTHR15238">
    <property type="entry name" value="54S RIBOSOMAL PROTEIN L39, MITOCHONDRIAL"/>
    <property type="match status" value="1"/>
</dbReference>
<dbReference type="PANTHER" id="PTHR15238:SF1">
    <property type="entry name" value="LARGE RIBOSOMAL SUBUNIT PROTEIN BL33M"/>
    <property type="match status" value="1"/>
</dbReference>
<dbReference type="Pfam" id="PF00471">
    <property type="entry name" value="Ribosomal_L33"/>
    <property type="match status" value="1"/>
</dbReference>
<dbReference type="SUPFAM" id="SSF57829">
    <property type="entry name" value="Zn-binding ribosomal proteins"/>
    <property type="match status" value="1"/>
</dbReference>
<dbReference type="PROSITE" id="PS00582">
    <property type="entry name" value="RIBOSOMAL_L33"/>
    <property type="match status" value="1"/>
</dbReference>
<organism>
    <name type="scientific">Escherichia coli (strain K12 / MC4100 / BW2952)</name>
    <dbReference type="NCBI Taxonomy" id="595496"/>
    <lineage>
        <taxon>Bacteria</taxon>
        <taxon>Pseudomonadati</taxon>
        <taxon>Pseudomonadota</taxon>
        <taxon>Gammaproteobacteria</taxon>
        <taxon>Enterobacterales</taxon>
        <taxon>Enterobacteriaceae</taxon>
        <taxon>Escherichia</taxon>
    </lineage>
</organism>
<reference key="1">
    <citation type="journal article" date="2009" name="J. Bacteriol.">
        <title>Genomic sequencing reveals regulatory mutations and recombinational events in the widely used MC4100 lineage of Escherichia coli K-12.</title>
        <authorList>
            <person name="Ferenci T."/>
            <person name="Zhou Z."/>
            <person name="Betteridge T."/>
            <person name="Ren Y."/>
            <person name="Liu Y."/>
            <person name="Feng L."/>
            <person name="Reeves P.R."/>
            <person name="Wang L."/>
        </authorList>
    </citation>
    <scope>NUCLEOTIDE SEQUENCE [LARGE SCALE GENOMIC DNA]</scope>
    <source>
        <strain>K12 / MC4100 / BW2952</strain>
    </source>
</reference>
<keyword id="KW-0687">Ribonucleoprotein</keyword>
<keyword id="KW-0689">Ribosomal protein</keyword>